<reference key="1">
    <citation type="journal article" date="2007" name="Nat. Biotechnol.">
        <title>Comparative analysis of the complete genome sequence of the plant growth-promoting bacterium Bacillus amyloliquefaciens FZB42.</title>
        <authorList>
            <person name="Chen X.H."/>
            <person name="Koumoutsi A."/>
            <person name="Scholz R."/>
            <person name="Eisenreich A."/>
            <person name="Schneider K."/>
            <person name="Heinemeyer I."/>
            <person name="Morgenstern B."/>
            <person name="Voss B."/>
            <person name="Hess W.R."/>
            <person name="Reva O."/>
            <person name="Junge H."/>
            <person name="Voigt B."/>
            <person name="Jungblut P.R."/>
            <person name="Vater J."/>
            <person name="Suessmuth R."/>
            <person name="Liesegang H."/>
            <person name="Strittmatter A."/>
            <person name="Gottschalk G."/>
            <person name="Borriss R."/>
        </authorList>
    </citation>
    <scope>NUCLEOTIDE SEQUENCE [LARGE SCALE GENOMIC DNA]</scope>
    <source>
        <strain>DSM 23117 / BGSC 10A6 / LMG 26770 / FZB42</strain>
    </source>
</reference>
<organism>
    <name type="scientific">Bacillus velezensis (strain DSM 23117 / BGSC 10A6 / LMG 26770 / FZB42)</name>
    <name type="common">Bacillus amyloliquefaciens subsp. plantarum</name>
    <dbReference type="NCBI Taxonomy" id="326423"/>
    <lineage>
        <taxon>Bacteria</taxon>
        <taxon>Bacillati</taxon>
        <taxon>Bacillota</taxon>
        <taxon>Bacilli</taxon>
        <taxon>Bacillales</taxon>
        <taxon>Bacillaceae</taxon>
        <taxon>Bacillus</taxon>
        <taxon>Bacillus amyloliquefaciens group</taxon>
    </lineage>
</organism>
<proteinExistence type="inferred from homology"/>
<keyword id="KW-0028">Amino-acid biosynthesis</keyword>
<keyword id="KW-0100">Branched-chain amino acid biosynthesis</keyword>
<keyword id="KW-0460">Magnesium</keyword>
<keyword id="KW-0479">Metal-binding</keyword>
<keyword id="KW-0521">NADP</keyword>
<keyword id="KW-0560">Oxidoreductase</keyword>
<accession>A7Z7B9</accession>
<protein>
    <recommendedName>
        <fullName evidence="1">Ketol-acid reductoisomerase (NADP(+))</fullName>
        <shortName evidence="1">KARI</shortName>
        <ecNumber evidence="1">1.1.1.86</ecNumber>
    </recommendedName>
    <alternativeName>
        <fullName evidence="1">Acetohydroxy-acid isomeroreductase</fullName>
        <shortName evidence="1">AHIR</shortName>
    </alternativeName>
    <alternativeName>
        <fullName evidence="1">Alpha-keto-beta-hydroxylacyl reductoisomerase</fullName>
    </alternativeName>
    <alternativeName>
        <fullName evidence="1">Ketol-acid reductoisomerase type 1</fullName>
    </alternativeName>
    <alternativeName>
        <fullName evidence="1">Ketol-acid reductoisomerase type I</fullName>
    </alternativeName>
</protein>
<dbReference type="EC" id="1.1.1.86" evidence="1"/>
<dbReference type="EMBL" id="CP000560">
    <property type="protein sequence ID" value="ABS74895.1"/>
    <property type="molecule type" value="Genomic_DNA"/>
</dbReference>
<dbReference type="RefSeq" id="WP_007408142.1">
    <property type="nucleotide sequence ID" value="NC_009725.2"/>
</dbReference>
<dbReference type="SMR" id="A7Z7B9"/>
<dbReference type="GeneID" id="93081677"/>
<dbReference type="KEGG" id="bay:RBAM_025350"/>
<dbReference type="HOGENOM" id="CLU_033821_0_1_9"/>
<dbReference type="UniPathway" id="UPA00047">
    <property type="reaction ID" value="UER00056"/>
</dbReference>
<dbReference type="UniPathway" id="UPA00049">
    <property type="reaction ID" value="UER00060"/>
</dbReference>
<dbReference type="Proteomes" id="UP000001120">
    <property type="component" value="Chromosome"/>
</dbReference>
<dbReference type="GO" id="GO:0005829">
    <property type="term" value="C:cytosol"/>
    <property type="evidence" value="ECO:0007669"/>
    <property type="project" value="TreeGrafter"/>
</dbReference>
<dbReference type="GO" id="GO:0004455">
    <property type="term" value="F:ketol-acid reductoisomerase activity"/>
    <property type="evidence" value="ECO:0007669"/>
    <property type="project" value="UniProtKB-UniRule"/>
</dbReference>
<dbReference type="GO" id="GO:0000287">
    <property type="term" value="F:magnesium ion binding"/>
    <property type="evidence" value="ECO:0007669"/>
    <property type="project" value="UniProtKB-UniRule"/>
</dbReference>
<dbReference type="GO" id="GO:0050661">
    <property type="term" value="F:NADP binding"/>
    <property type="evidence" value="ECO:0007669"/>
    <property type="project" value="InterPro"/>
</dbReference>
<dbReference type="GO" id="GO:0009097">
    <property type="term" value="P:isoleucine biosynthetic process"/>
    <property type="evidence" value="ECO:0007669"/>
    <property type="project" value="UniProtKB-UniRule"/>
</dbReference>
<dbReference type="GO" id="GO:0009099">
    <property type="term" value="P:L-valine biosynthetic process"/>
    <property type="evidence" value="ECO:0007669"/>
    <property type="project" value="UniProtKB-UniRule"/>
</dbReference>
<dbReference type="FunFam" id="3.40.50.720:FF:000023">
    <property type="entry name" value="Ketol-acid reductoisomerase (NADP(+))"/>
    <property type="match status" value="1"/>
</dbReference>
<dbReference type="Gene3D" id="6.10.240.10">
    <property type="match status" value="1"/>
</dbReference>
<dbReference type="Gene3D" id="3.40.50.720">
    <property type="entry name" value="NAD(P)-binding Rossmann-like Domain"/>
    <property type="match status" value="1"/>
</dbReference>
<dbReference type="HAMAP" id="MF_00435">
    <property type="entry name" value="IlvC"/>
    <property type="match status" value="1"/>
</dbReference>
<dbReference type="InterPro" id="IPR008927">
    <property type="entry name" value="6-PGluconate_DH-like_C_sf"/>
</dbReference>
<dbReference type="InterPro" id="IPR013023">
    <property type="entry name" value="KARI"/>
</dbReference>
<dbReference type="InterPro" id="IPR000506">
    <property type="entry name" value="KARI_C"/>
</dbReference>
<dbReference type="InterPro" id="IPR013116">
    <property type="entry name" value="KARI_N"/>
</dbReference>
<dbReference type="InterPro" id="IPR014359">
    <property type="entry name" value="KARI_prok"/>
</dbReference>
<dbReference type="InterPro" id="IPR036291">
    <property type="entry name" value="NAD(P)-bd_dom_sf"/>
</dbReference>
<dbReference type="NCBIfam" id="TIGR00465">
    <property type="entry name" value="ilvC"/>
    <property type="match status" value="1"/>
</dbReference>
<dbReference type="NCBIfam" id="NF004017">
    <property type="entry name" value="PRK05479.1"/>
    <property type="match status" value="1"/>
</dbReference>
<dbReference type="NCBIfam" id="NF009940">
    <property type="entry name" value="PRK13403.1"/>
    <property type="match status" value="1"/>
</dbReference>
<dbReference type="PANTHER" id="PTHR21371">
    <property type="entry name" value="KETOL-ACID REDUCTOISOMERASE, MITOCHONDRIAL"/>
    <property type="match status" value="1"/>
</dbReference>
<dbReference type="PANTHER" id="PTHR21371:SF1">
    <property type="entry name" value="KETOL-ACID REDUCTOISOMERASE, MITOCHONDRIAL"/>
    <property type="match status" value="1"/>
</dbReference>
<dbReference type="Pfam" id="PF01450">
    <property type="entry name" value="KARI_C"/>
    <property type="match status" value="1"/>
</dbReference>
<dbReference type="Pfam" id="PF07991">
    <property type="entry name" value="KARI_N"/>
    <property type="match status" value="1"/>
</dbReference>
<dbReference type="PIRSF" id="PIRSF000116">
    <property type="entry name" value="IlvC_gammaproteo"/>
    <property type="match status" value="1"/>
</dbReference>
<dbReference type="SUPFAM" id="SSF48179">
    <property type="entry name" value="6-phosphogluconate dehydrogenase C-terminal domain-like"/>
    <property type="match status" value="1"/>
</dbReference>
<dbReference type="SUPFAM" id="SSF51735">
    <property type="entry name" value="NAD(P)-binding Rossmann-fold domains"/>
    <property type="match status" value="1"/>
</dbReference>
<dbReference type="PROSITE" id="PS51851">
    <property type="entry name" value="KARI_C"/>
    <property type="match status" value="1"/>
</dbReference>
<dbReference type="PROSITE" id="PS51850">
    <property type="entry name" value="KARI_N"/>
    <property type="match status" value="1"/>
</dbReference>
<gene>
    <name evidence="1" type="primary">ilvC</name>
    <name type="ordered locus">RBAM_025350</name>
</gene>
<sequence>MVKVYYNGDIKENVLAGKKVAIIGYGSQGHAHALNLKESGIDVIVGVRQGKSFTQAQEDGHQVFSVREAAAQADIIMVLLPDEQQQKVYEAEIKDELTAGKSLVFAHGFNVHFHQIVPPADVDVFLVAPKGPGHLVRRTYEQGAGVPALFAIYQDVSGEAKDTALAYAKGIGGARAGVLETTFKEETETDLFGEQAVLCGGLTALVKAGFETLTEAGYQPELAYFECLHELKLIVDLMYEEGLAGMRYSISDTAQWGDFVSGPRVVDAKVKESMKQVLTDIQNGTFAKEWIVENQVNRPRFNAINASENEHQIEKVGRQLREMMPFVKQGKKKEAVVSVAQN</sequence>
<evidence type="ECO:0000255" key="1">
    <source>
        <dbReference type="HAMAP-Rule" id="MF_00435"/>
    </source>
</evidence>
<evidence type="ECO:0000255" key="2">
    <source>
        <dbReference type="PROSITE-ProRule" id="PRU01197"/>
    </source>
</evidence>
<evidence type="ECO:0000255" key="3">
    <source>
        <dbReference type="PROSITE-ProRule" id="PRU01198"/>
    </source>
</evidence>
<name>ILVC_BACVZ</name>
<feature type="chain" id="PRO_1000050479" description="Ketol-acid reductoisomerase (NADP(+))">
    <location>
        <begin position="1"/>
        <end position="342"/>
    </location>
</feature>
<feature type="domain" description="KARI N-terminal Rossmann" evidence="2">
    <location>
        <begin position="2"/>
        <end position="181"/>
    </location>
</feature>
<feature type="domain" description="KARI C-terminal knotted" evidence="3">
    <location>
        <begin position="182"/>
        <end position="327"/>
    </location>
</feature>
<feature type="active site" evidence="1">
    <location>
        <position position="107"/>
    </location>
</feature>
<feature type="binding site" evidence="1">
    <location>
        <begin position="25"/>
        <end position="28"/>
    </location>
    <ligand>
        <name>NADP(+)</name>
        <dbReference type="ChEBI" id="CHEBI:58349"/>
    </ligand>
</feature>
<feature type="binding site" evidence="1">
    <location>
        <position position="48"/>
    </location>
    <ligand>
        <name>NADP(+)</name>
        <dbReference type="ChEBI" id="CHEBI:58349"/>
    </ligand>
</feature>
<feature type="binding site" evidence="1">
    <location>
        <position position="52"/>
    </location>
    <ligand>
        <name>NADP(+)</name>
        <dbReference type="ChEBI" id="CHEBI:58349"/>
    </ligand>
</feature>
<feature type="binding site" evidence="1">
    <location>
        <begin position="82"/>
        <end position="85"/>
    </location>
    <ligand>
        <name>NADP(+)</name>
        <dbReference type="ChEBI" id="CHEBI:58349"/>
    </ligand>
</feature>
<feature type="binding site" evidence="1">
    <location>
        <position position="133"/>
    </location>
    <ligand>
        <name>NADP(+)</name>
        <dbReference type="ChEBI" id="CHEBI:58349"/>
    </ligand>
</feature>
<feature type="binding site" evidence="1">
    <location>
        <position position="190"/>
    </location>
    <ligand>
        <name>Mg(2+)</name>
        <dbReference type="ChEBI" id="CHEBI:18420"/>
        <label>1</label>
    </ligand>
</feature>
<feature type="binding site" evidence="1">
    <location>
        <position position="190"/>
    </location>
    <ligand>
        <name>Mg(2+)</name>
        <dbReference type="ChEBI" id="CHEBI:18420"/>
        <label>2</label>
    </ligand>
</feature>
<feature type="binding site" evidence="1">
    <location>
        <position position="194"/>
    </location>
    <ligand>
        <name>Mg(2+)</name>
        <dbReference type="ChEBI" id="CHEBI:18420"/>
        <label>1</label>
    </ligand>
</feature>
<feature type="binding site" evidence="1">
    <location>
        <position position="226"/>
    </location>
    <ligand>
        <name>Mg(2+)</name>
        <dbReference type="ChEBI" id="CHEBI:18420"/>
        <label>2</label>
    </ligand>
</feature>
<feature type="binding site" evidence="1">
    <location>
        <position position="230"/>
    </location>
    <ligand>
        <name>Mg(2+)</name>
        <dbReference type="ChEBI" id="CHEBI:18420"/>
        <label>2</label>
    </ligand>
</feature>
<feature type="binding site" evidence="1">
    <location>
        <position position="251"/>
    </location>
    <ligand>
        <name>substrate</name>
    </ligand>
</feature>
<comment type="function">
    <text evidence="1">Involved in the biosynthesis of branched-chain amino acids (BCAA). Catalyzes an alkyl-migration followed by a ketol-acid reduction of (S)-2-acetolactate (S2AL) to yield (R)-2,3-dihydroxy-isovalerate. In the isomerase reaction, S2AL is rearranged via a Mg-dependent methyl migration to produce 3-hydroxy-3-methyl-2-ketobutyrate (HMKB). In the reductase reaction, this 2-ketoacid undergoes a metal-dependent reduction by NADPH to yield (R)-2,3-dihydroxy-isovalerate.</text>
</comment>
<comment type="catalytic activity">
    <reaction evidence="1">
        <text>(2R)-2,3-dihydroxy-3-methylbutanoate + NADP(+) = (2S)-2-acetolactate + NADPH + H(+)</text>
        <dbReference type="Rhea" id="RHEA:22068"/>
        <dbReference type="ChEBI" id="CHEBI:15378"/>
        <dbReference type="ChEBI" id="CHEBI:49072"/>
        <dbReference type="ChEBI" id="CHEBI:57783"/>
        <dbReference type="ChEBI" id="CHEBI:58349"/>
        <dbReference type="ChEBI" id="CHEBI:58476"/>
        <dbReference type="EC" id="1.1.1.86"/>
    </reaction>
</comment>
<comment type="catalytic activity">
    <reaction evidence="1">
        <text>(2R,3R)-2,3-dihydroxy-3-methylpentanoate + NADP(+) = (S)-2-ethyl-2-hydroxy-3-oxobutanoate + NADPH + H(+)</text>
        <dbReference type="Rhea" id="RHEA:13493"/>
        <dbReference type="ChEBI" id="CHEBI:15378"/>
        <dbReference type="ChEBI" id="CHEBI:49256"/>
        <dbReference type="ChEBI" id="CHEBI:49258"/>
        <dbReference type="ChEBI" id="CHEBI:57783"/>
        <dbReference type="ChEBI" id="CHEBI:58349"/>
        <dbReference type="EC" id="1.1.1.86"/>
    </reaction>
</comment>
<comment type="cofactor">
    <cofactor evidence="1">
        <name>Mg(2+)</name>
        <dbReference type="ChEBI" id="CHEBI:18420"/>
    </cofactor>
    <text evidence="1">Binds 2 magnesium ions per subunit.</text>
</comment>
<comment type="pathway">
    <text evidence="1">Amino-acid biosynthesis; L-isoleucine biosynthesis; L-isoleucine from 2-oxobutanoate: step 2/4.</text>
</comment>
<comment type="pathway">
    <text evidence="1">Amino-acid biosynthesis; L-valine biosynthesis; L-valine from pyruvate: step 2/4.</text>
</comment>
<comment type="similarity">
    <text evidence="1">Belongs to the ketol-acid reductoisomerase family.</text>
</comment>